<evidence type="ECO:0000255" key="1">
    <source>
        <dbReference type="HAMAP-Rule" id="MF_00508"/>
    </source>
</evidence>
<evidence type="ECO:0000305" key="2"/>
<organism>
    <name type="scientific">Francisella tularensis subsp. novicida (strain U112)</name>
    <dbReference type="NCBI Taxonomy" id="401614"/>
    <lineage>
        <taxon>Bacteria</taxon>
        <taxon>Pseudomonadati</taxon>
        <taxon>Pseudomonadota</taxon>
        <taxon>Gammaproteobacteria</taxon>
        <taxon>Thiotrichales</taxon>
        <taxon>Francisellaceae</taxon>
        <taxon>Francisella</taxon>
    </lineage>
</organism>
<reference key="1">
    <citation type="journal article" date="2007" name="Genome Biol.">
        <title>Comparison of Francisella tularensis genomes reveals evolutionary events associated with the emergence of human pathogenic strains.</title>
        <authorList>
            <person name="Rohmer L."/>
            <person name="Fong C."/>
            <person name="Abmayr S."/>
            <person name="Wasnick M."/>
            <person name="Larson Freeman T.J."/>
            <person name="Radey M."/>
            <person name="Guina T."/>
            <person name="Svensson K."/>
            <person name="Hayden H.S."/>
            <person name="Jacobs M."/>
            <person name="Gallagher L.A."/>
            <person name="Manoil C."/>
            <person name="Ernst R.K."/>
            <person name="Drees B."/>
            <person name="Buckley D."/>
            <person name="Haugen E."/>
            <person name="Bovee D."/>
            <person name="Zhou Y."/>
            <person name="Chang J."/>
            <person name="Levy R."/>
            <person name="Lim R."/>
            <person name="Gillett W."/>
            <person name="Guenthener D."/>
            <person name="Kang A."/>
            <person name="Shaffer S.A."/>
            <person name="Taylor G."/>
            <person name="Chen J."/>
            <person name="Gallis B."/>
            <person name="D'Argenio D.A."/>
            <person name="Forsman M."/>
            <person name="Olson M.V."/>
            <person name="Goodlett D.R."/>
            <person name="Kaul R."/>
            <person name="Miller S.I."/>
            <person name="Brittnacher M.J."/>
        </authorList>
    </citation>
    <scope>NUCLEOTIDE SEQUENCE [LARGE SCALE GENOMIC DNA]</scope>
    <source>
        <strain>U112</strain>
    </source>
</reference>
<sequence>MAINNQRIRIRLKAFDHKLIDISTQEIVDTAKKTGAQVKGPIPLPVRKERFTILISPHVNKKARDQYEIRTHKRLIDIVEPTDKTVDALMKLDLASGVDVQISLS</sequence>
<proteinExistence type="inferred from homology"/>
<name>RS10_FRATN</name>
<keyword id="KW-0687">Ribonucleoprotein</keyword>
<keyword id="KW-0689">Ribosomal protein</keyword>
<feature type="chain" id="PRO_1000015024" description="Small ribosomal subunit protein uS10">
    <location>
        <begin position="1"/>
        <end position="105"/>
    </location>
</feature>
<protein>
    <recommendedName>
        <fullName evidence="1">Small ribosomal subunit protein uS10</fullName>
    </recommendedName>
    <alternativeName>
        <fullName evidence="2">30S ribosomal protein S10</fullName>
    </alternativeName>
</protein>
<dbReference type="EMBL" id="CP000439">
    <property type="protein sequence ID" value="ABK89147.1"/>
    <property type="molecule type" value="Genomic_DNA"/>
</dbReference>
<dbReference type="SMR" id="A0Q4I2"/>
<dbReference type="KEGG" id="ftn:FTN_0238"/>
<dbReference type="KEGG" id="ftx:AW25_1804"/>
<dbReference type="Proteomes" id="UP000000762">
    <property type="component" value="Chromosome"/>
</dbReference>
<dbReference type="GO" id="GO:1990904">
    <property type="term" value="C:ribonucleoprotein complex"/>
    <property type="evidence" value="ECO:0007669"/>
    <property type="project" value="UniProtKB-KW"/>
</dbReference>
<dbReference type="GO" id="GO:0005840">
    <property type="term" value="C:ribosome"/>
    <property type="evidence" value="ECO:0007669"/>
    <property type="project" value="UniProtKB-KW"/>
</dbReference>
<dbReference type="GO" id="GO:0003735">
    <property type="term" value="F:structural constituent of ribosome"/>
    <property type="evidence" value="ECO:0007669"/>
    <property type="project" value="InterPro"/>
</dbReference>
<dbReference type="GO" id="GO:0000049">
    <property type="term" value="F:tRNA binding"/>
    <property type="evidence" value="ECO:0007669"/>
    <property type="project" value="UniProtKB-UniRule"/>
</dbReference>
<dbReference type="GO" id="GO:0006412">
    <property type="term" value="P:translation"/>
    <property type="evidence" value="ECO:0007669"/>
    <property type="project" value="UniProtKB-UniRule"/>
</dbReference>
<dbReference type="FunFam" id="3.30.70.600:FF:000001">
    <property type="entry name" value="30S ribosomal protein S10"/>
    <property type="match status" value="1"/>
</dbReference>
<dbReference type="Gene3D" id="3.30.70.600">
    <property type="entry name" value="Ribosomal protein S10 domain"/>
    <property type="match status" value="1"/>
</dbReference>
<dbReference type="HAMAP" id="MF_00508">
    <property type="entry name" value="Ribosomal_uS10"/>
    <property type="match status" value="1"/>
</dbReference>
<dbReference type="InterPro" id="IPR001848">
    <property type="entry name" value="Ribosomal_uS10"/>
</dbReference>
<dbReference type="InterPro" id="IPR027486">
    <property type="entry name" value="Ribosomal_uS10_dom"/>
</dbReference>
<dbReference type="InterPro" id="IPR036838">
    <property type="entry name" value="Ribosomal_uS10_dom_sf"/>
</dbReference>
<dbReference type="NCBIfam" id="NF001861">
    <property type="entry name" value="PRK00596.1"/>
    <property type="match status" value="1"/>
</dbReference>
<dbReference type="NCBIfam" id="TIGR01049">
    <property type="entry name" value="rpsJ_bact"/>
    <property type="match status" value="1"/>
</dbReference>
<dbReference type="PANTHER" id="PTHR11700">
    <property type="entry name" value="30S RIBOSOMAL PROTEIN S10 FAMILY MEMBER"/>
    <property type="match status" value="1"/>
</dbReference>
<dbReference type="Pfam" id="PF00338">
    <property type="entry name" value="Ribosomal_S10"/>
    <property type="match status" value="1"/>
</dbReference>
<dbReference type="PRINTS" id="PR00971">
    <property type="entry name" value="RIBOSOMALS10"/>
</dbReference>
<dbReference type="SMART" id="SM01403">
    <property type="entry name" value="Ribosomal_S10"/>
    <property type="match status" value="1"/>
</dbReference>
<dbReference type="SUPFAM" id="SSF54999">
    <property type="entry name" value="Ribosomal protein S10"/>
    <property type="match status" value="1"/>
</dbReference>
<accession>A0Q4I2</accession>
<comment type="function">
    <text evidence="1">Involved in the binding of tRNA to the ribosomes.</text>
</comment>
<comment type="subunit">
    <text evidence="1">Part of the 30S ribosomal subunit.</text>
</comment>
<comment type="similarity">
    <text evidence="1">Belongs to the universal ribosomal protein uS10 family.</text>
</comment>
<gene>
    <name evidence="1" type="primary">rpsJ</name>
    <name type="ordered locus">FTN_0238</name>
</gene>